<sequence>MNYVGLIIVLSCLWLGSNASDPDDPLLVQLPQGKLRGRDNGSYYSYESIPYAEPPTGDLRFEAPEPYKQKWSDIFDATKTPVACLQWDQFTPGANKLVGEEDCLTVSIYKPKNSKRSTFPVVAHIHGGAFMFGAAWQNGHENVMREGKFILVKISYRLGPLGFASTGDRDLPGNYGLKDQRLALKWIKQNIASFGGEPQNVLLIGHSAGGASVHLQMLREDFGQLAKAAFSFSGNALDPWVVQKGARGRAFELGRNVGCESAEDSASLKKCLKSKSASELVTAVRKFLIFSYVPFAPFSPVLEPSDAPDAILTQDPREVIKSGKFGQVPWAVSYVTEDGGYNAALLLKERKSGIVIDDLNDRWLELAPYFLFYRDTKTKKDMDDYSRKIKEDYLGNQKFDIESYSELQRLFTDILFKNSTQESLDLHRKYGKSPAYAYVYDNPAEKGIAQVLANRTDYDFGTVHGDDYFLIFENFVREVEMRPDEEIISRNFINMLADFASSDNGVLKYGECAFKNNVGSEKFQLLAIYIDGCQNRQHVEFP</sequence>
<protein>
    <recommendedName>
        <fullName>Esterase 6</fullName>
        <shortName>Est-6</shortName>
        <ecNumber>3.1.1.1</ecNumber>
    </recommendedName>
    <alternativeName>
        <fullName>Carboxylic-ester hydrolase 6</fullName>
        <shortName>Carboxylesterase-6</shortName>
    </alternativeName>
</protein>
<name>EST6_DROSI</name>
<feature type="signal peptide" evidence="1">
    <location>
        <begin position="1"/>
        <end position="19"/>
    </location>
</feature>
<feature type="chain" id="PRO_0000008564" description="Esterase 6">
    <location>
        <begin position="20"/>
        <end position="542"/>
    </location>
</feature>
<feature type="active site" description="Acyl-ester intermediate" evidence="3">
    <location>
        <position position="207"/>
    </location>
</feature>
<feature type="active site" description="Charge relay system" evidence="1">
    <location>
        <position position="464"/>
    </location>
</feature>
<feature type="glycosylation site" description="N-linked (GlcNAc...) asparagine" evidence="2">
    <location>
        <position position="40"/>
    </location>
</feature>
<feature type="glycosylation site" description="N-linked (GlcNAc...) asparagine" evidence="2">
    <location>
        <position position="418"/>
    </location>
</feature>
<feature type="glycosylation site" description="N-linked (GlcNAc...) asparagine" evidence="2">
    <location>
        <position position="454"/>
    </location>
</feature>
<feature type="disulfide bond" evidence="1">
    <location>
        <begin position="84"/>
        <end position="103"/>
    </location>
</feature>
<feature type="disulfide bond" evidence="1">
    <location>
        <begin position="259"/>
        <end position="271"/>
    </location>
</feature>
<feature type="disulfide bond" evidence="2">
    <location>
        <begin position="512"/>
        <end position="533"/>
    </location>
</feature>
<evidence type="ECO:0000250" key="1"/>
<evidence type="ECO:0000255" key="2"/>
<evidence type="ECO:0000255" key="3">
    <source>
        <dbReference type="PROSITE-ProRule" id="PRU10039"/>
    </source>
</evidence>
<evidence type="ECO:0000305" key="4"/>
<dbReference type="EC" id="3.1.1.1"/>
<dbReference type="EMBL" id="L10670">
    <property type="protein sequence ID" value="AAA18250.1"/>
    <property type="molecule type" value="Genomic_DNA"/>
</dbReference>
<dbReference type="SMR" id="Q08662"/>
<dbReference type="ESTHER" id="drosi-este6">
    <property type="family name" value="Carb_B_Arthropoda"/>
</dbReference>
<dbReference type="MEROPS" id="S09.947"/>
<dbReference type="GlyCosmos" id="Q08662">
    <property type="glycosylation" value="3 sites, No reported glycans"/>
</dbReference>
<dbReference type="OrthoDB" id="6846267at2759"/>
<dbReference type="GO" id="GO:0005576">
    <property type="term" value="C:extracellular region"/>
    <property type="evidence" value="ECO:0007669"/>
    <property type="project" value="UniProtKB-SubCell"/>
</dbReference>
<dbReference type="GO" id="GO:0106435">
    <property type="term" value="F:carboxylesterase activity"/>
    <property type="evidence" value="ECO:0007669"/>
    <property type="project" value="UniProtKB-EC"/>
</dbReference>
<dbReference type="GO" id="GO:0034338">
    <property type="term" value="F:short-chain carboxylesterase activity"/>
    <property type="evidence" value="ECO:0007669"/>
    <property type="project" value="EnsemblMetazoa"/>
</dbReference>
<dbReference type="GO" id="GO:0007619">
    <property type="term" value="P:courtship behavior"/>
    <property type="evidence" value="ECO:0007669"/>
    <property type="project" value="EnsemblMetazoa"/>
</dbReference>
<dbReference type="GO" id="GO:0042811">
    <property type="term" value="P:pheromone biosynthetic process"/>
    <property type="evidence" value="ECO:0007669"/>
    <property type="project" value="EnsemblMetazoa"/>
</dbReference>
<dbReference type="GO" id="GO:1990834">
    <property type="term" value="P:response to odorant"/>
    <property type="evidence" value="ECO:0007669"/>
    <property type="project" value="EnsemblMetazoa"/>
</dbReference>
<dbReference type="CDD" id="cd00312">
    <property type="entry name" value="Esterase_lipase"/>
    <property type="match status" value="1"/>
</dbReference>
<dbReference type="FunFam" id="3.40.50.1820:FF:000378">
    <property type="entry name" value="Carboxylic ester hydrolase"/>
    <property type="match status" value="1"/>
</dbReference>
<dbReference type="Gene3D" id="3.40.50.1820">
    <property type="entry name" value="alpha/beta hydrolase"/>
    <property type="match status" value="1"/>
</dbReference>
<dbReference type="InterPro" id="IPR029058">
    <property type="entry name" value="AB_hydrolase_fold"/>
</dbReference>
<dbReference type="InterPro" id="IPR002018">
    <property type="entry name" value="CarbesteraseB"/>
</dbReference>
<dbReference type="InterPro" id="IPR019826">
    <property type="entry name" value="Carboxylesterase_B_AS"/>
</dbReference>
<dbReference type="InterPro" id="IPR019819">
    <property type="entry name" value="Carboxylesterase_B_CS"/>
</dbReference>
<dbReference type="PANTHER" id="PTHR43142">
    <property type="entry name" value="CARBOXYLIC ESTER HYDROLASE"/>
    <property type="match status" value="1"/>
</dbReference>
<dbReference type="PANTHER" id="PTHR43142:SF1">
    <property type="entry name" value="CARBOXYLIC ESTER HYDROLASE"/>
    <property type="match status" value="1"/>
</dbReference>
<dbReference type="Pfam" id="PF00135">
    <property type="entry name" value="COesterase"/>
    <property type="match status" value="1"/>
</dbReference>
<dbReference type="SUPFAM" id="SSF53474">
    <property type="entry name" value="alpha/beta-Hydrolases"/>
    <property type="match status" value="1"/>
</dbReference>
<dbReference type="PROSITE" id="PS00122">
    <property type="entry name" value="CARBOXYLESTERASE_B_1"/>
    <property type="match status" value="1"/>
</dbReference>
<dbReference type="PROSITE" id="PS00941">
    <property type="entry name" value="CARBOXYLESTERASE_B_2"/>
    <property type="match status" value="1"/>
</dbReference>
<reference key="1">
    <citation type="journal article" date="1993" name="Genetica">
        <title>Conservation and change in structural and 5' flanking sequences of esterase 6 in sibling Drosophila species.</title>
        <authorList>
            <person name="Karotam J."/>
            <person name="Delves A.C."/>
            <person name="Oakeshott J.G."/>
        </authorList>
    </citation>
    <scope>NUCLEOTIDE SEQUENCE [GENOMIC DNA]</scope>
</reference>
<gene>
    <name type="primary">Est-6</name>
    <name type="synonym">est6</name>
</gene>
<comment type="function">
    <text>Transferred from the ejaculatory bulbs of males to the female genitals upon copulation, plays an important role in the reproductive biology.</text>
</comment>
<comment type="catalytic activity">
    <reaction evidence="3">
        <text>a carboxylic ester + H2O = an alcohol + a carboxylate + H(+)</text>
        <dbReference type="Rhea" id="RHEA:21164"/>
        <dbReference type="ChEBI" id="CHEBI:15377"/>
        <dbReference type="ChEBI" id="CHEBI:15378"/>
        <dbReference type="ChEBI" id="CHEBI:29067"/>
        <dbReference type="ChEBI" id="CHEBI:30879"/>
        <dbReference type="ChEBI" id="CHEBI:33308"/>
        <dbReference type="EC" id="3.1.1.1"/>
    </reaction>
</comment>
<comment type="subunit">
    <text>Monomer.</text>
</comment>
<comment type="subcellular location">
    <subcellularLocation>
        <location>Secreted</location>
    </subcellularLocation>
</comment>
<comment type="similarity">
    <text evidence="4">Belongs to the type-B carboxylesterase/lipase family.</text>
</comment>
<keyword id="KW-1015">Disulfide bond</keyword>
<keyword id="KW-0325">Glycoprotein</keyword>
<keyword id="KW-0378">Hydrolase</keyword>
<keyword id="KW-0964">Secreted</keyword>
<keyword id="KW-0719">Serine esterase</keyword>
<keyword id="KW-0732">Signal</keyword>
<organism>
    <name type="scientific">Drosophila simulans</name>
    <name type="common">Fruit fly</name>
    <dbReference type="NCBI Taxonomy" id="7240"/>
    <lineage>
        <taxon>Eukaryota</taxon>
        <taxon>Metazoa</taxon>
        <taxon>Ecdysozoa</taxon>
        <taxon>Arthropoda</taxon>
        <taxon>Hexapoda</taxon>
        <taxon>Insecta</taxon>
        <taxon>Pterygota</taxon>
        <taxon>Neoptera</taxon>
        <taxon>Endopterygota</taxon>
        <taxon>Diptera</taxon>
        <taxon>Brachycera</taxon>
        <taxon>Muscomorpha</taxon>
        <taxon>Ephydroidea</taxon>
        <taxon>Drosophilidae</taxon>
        <taxon>Drosophila</taxon>
        <taxon>Sophophora</taxon>
    </lineage>
</organism>
<proteinExistence type="inferred from homology"/>
<accession>Q08662</accession>